<sequence length="231" mass="26258">MGCVSSCFRVEDIDEYMNPNSSVYRNCPCIRCLAHNFLNLYISVFRRGETRSLPSSVQATASITSSSSHDNFLSEAFRSTPRPLPYDADPRYFRSLVSRREKGSSHSHEEVEPLRSDSDADSESFGVGGCKWANNKSTLSDKDSKEEYSSKSSLRILRSRSKSIMADSENMYILSEDEDVCPTCLEEYTSENPKIVTKCSHHFHLSCIYEWMERSENCPVCGKVMEFNETP</sequence>
<proteinExistence type="evidence at transcript level"/>
<evidence type="ECO:0000250" key="1"/>
<evidence type="ECO:0000255" key="2">
    <source>
        <dbReference type="PROSITE-ProRule" id="PRU00175"/>
    </source>
</evidence>
<evidence type="ECO:0000256" key="3">
    <source>
        <dbReference type="SAM" id="MobiDB-lite"/>
    </source>
</evidence>
<evidence type="ECO:0000303" key="4">
    <source ref="3"/>
</evidence>
<evidence type="ECO:0000305" key="5"/>
<name>RING3_ARATH</name>
<gene>
    <name type="ordered locus">At3g02290</name>
    <name type="ORF">F14P3.6</name>
</gene>
<organism>
    <name type="scientific">Arabidopsis thaliana</name>
    <name type="common">Mouse-ear cress</name>
    <dbReference type="NCBI Taxonomy" id="3702"/>
    <lineage>
        <taxon>Eukaryota</taxon>
        <taxon>Viridiplantae</taxon>
        <taxon>Streptophyta</taxon>
        <taxon>Embryophyta</taxon>
        <taxon>Tracheophyta</taxon>
        <taxon>Spermatophyta</taxon>
        <taxon>Magnoliopsida</taxon>
        <taxon>eudicotyledons</taxon>
        <taxon>Gunneridae</taxon>
        <taxon>Pentapetalae</taxon>
        <taxon>rosids</taxon>
        <taxon>malvids</taxon>
        <taxon>Brassicales</taxon>
        <taxon>Brassicaceae</taxon>
        <taxon>Camelineae</taxon>
        <taxon>Arabidopsis</taxon>
    </lineage>
</organism>
<dbReference type="EC" id="2.3.2.27"/>
<dbReference type="EMBL" id="AC009755">
    <property type="protein sequence ID" value="AAF02127.1"/>
    <property type="status" value="ALT_SEQ"/>
    <property type="molecule type" value="Genomic_DNA"/>
</dbReference>
<dbReference type="EMBL" id="CP002686">
    <property type="protein sequence ID" value="AEE73788.1"/>
    <property type="molecule type" value="Genomic_DNA"/>
</dbReference>
<dbReference type="EMBL" id="CP002686">
    <property type="protein sequence ID" value="AEE73789.2"/>
    <property type="molecule type" value="Genomic_DNA"/>
</dbReference>
<dbReference type="EMBL" id="CP002686">
    <property type="protein sequence ID" value="ANM63853.1"/>
    <property type="molecule type" value="Genomic_DNA"/>
</dbReference>
<dbReference type="EMBL" id="CP002686">
    <property type="protein sequence ID" value="ANM63854.1"/>
    <property type="molecule type" value="Genomic_DNA"/>
</dbReference>
<dbReference type="EMBL" id="CP002686">
    <property type="protein sequence ID" value="ANM63855.1"/>
    <property type="molecule type" value="Genomic_DNA"/>
</dbReference>
<dbReference type="EMBL" id="AK221581">
    <property type="protein sequence ID" value="BAD95066.1"/>
    <property type="molecule type" value="mRNA"/>
</dbReference>
<dbReference type="EMBL" id="BT024610">
    <property type="protein sequence ID" value="ABD43008.1"/>
    <property type="molecule type" value="mRNA"/>
</dbReference>
<dbReference type="EMBL" id="AY085549">
    <property type="protein sequence ID" value="AAM62773.1"/>
    <property type="molecule type" value="mRNA"/>
</dbReference>
<dbReference type="RefSeq" id="NP_001319449.1">
    <molecule id="Q8LE94-1"/>
    <property type="nucleotide sequence ID" value="NM_001337393.1"/>
</dbReference>
<dbReference type="RefSeq" id="NP_001325921.1">
    <molecule id="Q8LE94-1"/>
    <property type="nucleotide sequence ID" value="NM_001337395.1"/>
</dbReference>
<dbReference type="RefSeq" id="NP_001325922.1">
    <molecule id="Q8LE94-1"/>
    <property type="nucleotide sequence ID" value="NM_001337397.1"/>
</dbReference>
<dbReference type="RefSeq" id="NP_001325923.1">
    <molecule id="Q8LE94-1"/>
    <property type="nucleotide sequence ID" value="NM_001337394.1"/>
</dbReference>
<dbReference type="RefSeq" id="NP_566169.1">
    <molecule id="Q8LE94-1"/>
    <property type="nucleotide sequence ID" value="NM_111096.4"/>
</dbReference>
<dbReference type="SMR" id="Q8LE94"/>
<dbReference type="BioGRID" id="6512">
    <property type="interactions" value="2"/>
</dbReference>
<dbReference type="FunCoup" id="Q8LE94">
    <property type="interactions" value="257"/>
</dbReference>
<dbReference type="IntAct" id="Q8LE94">
    <property type="interactions" value="2"/>
</dbReference>
<dbReference type="STRING" id="3702.Q8LE94"/>
<dbReference type="iPTMnet" id="Q8LE94"/>
<dbReference type="PaxDb" id="3702-AT3G02290.1"/>
<dbReference type="ProteomicsDB" id="236254">
    <molecule id="Q8LE94-1"/>
</dbReference>
<dbReference type="EnsemblPlants" id="AT3G02290.1">
    <molecule id="Q8LE94-1"/>
    <property type="protein sequence ID" value="AT3G02290.1"/>
    <property type="gene ID" value="AT3G02290"/>
</dbReference>
<dbReference type="EnsemblPlants" id="AT3G02290.2">
    <molecule id="Q8LE94-1"/>
    <property type="protein sequence ID" value="AT3G02290.2"/>
    <property type="gene ID" value="AT3G02290"/>
</dbReference>
<dbReference type="EnsemblPlants" id="AT3G02290.3">
    <molecule id="Q8LE94-1"/>
    <property type="protein sequence ID" value="AT3G02290.3"/>
    <property type="gene ID" value="AT3G02290"/>
</dbReference>
<dbReference type="EnsemblPlants" id="AT3G02290.4">
    <molecule id="Q8LE94-1"/>
    <property type="protein sequence ID" value="AT3G02290.4"/>
    <property type="gene ID" value="AT3G02290"/>
</dbReference>
<dbReference type="EnsemblPlants" id="AT3G02290.6">
    <molecule id="Q8LE94-1"/>
    <property type="protein sequence ID" value="AT3G02290.6"/>
    <property type="gene ID" value="AT3G02290"/>
</dbReference>
<dbReference type="GeneID" id="821179"/>
<dbReference type="Gramene" id="AT3G02290.1">
    <molecule id="Q8LE94-1"/>
    <property type="protein sequence ID" value="AT3G02290.1"/>
    <property type="gene ID" value="AT3G02290"/>
</dbReference>
<dbReference type="Gramene" id="AT3G02290.2">
    <molecule id="Q8LE94-1"/>
    <property type="protein sequence ID" value="AT3G02290.2"/>
    <property type="gene ID" value="AT3G02290"/>
</dbReference>
<dbReference type="Gramene" id="AT3G02290.3">
    <molecule id="Q8LE94-1"/>
    <property type="protein sequence ID" value="AT3G02290.3"/>
    <property type="gene ID" value="AT3G02290"/>
</dbReference>
<dbReference type="Gramene" id="AT3G02290.4">
    <molecule id="Q8LE94-1"/>
    <property type="protein sequence ID" value="AT3G02290.4"/>
    <property type="gene ID" value="AT3G02290"/>
</dbReference>
<dbReference type="Gramene" id="AT3G02290.6">
    <molecule id="Q8LE94-1"/>
    <property type="protein sequence ID" value="AT3G02290.6"/>
    <property type="gene ID" value="AT3G02290"/>
</dbReference>
<dbReference type="KEGG" id="ath:AT3G02290"/>
<dbReference type="Araport" id="AT3G02290"/>
<dbReference type="TAIR" id="AT3G02290"/>
<dbReference type="eggNOG" id="KOG0800">
    <property type="taxonomic scope" value="Eukaryota"/>
</dbReference>
<dbReference type="HOGENOM" id="CLU_081123_0_0_1"/>
<dbReference type="InParanoid" id="Q8LE94"/>
<dbReference type="OrthoDB" id="8062037at2759"/>
<dbReference type="PhylomeDB" id="Q8LE94"/>
<dbReference type="UniPathway" id="UPA00143"/>
<dbReference type="PRO" id="PR:Q8LE94"/>
<dbReference type="Proteomes" id="UP000006548">
    <property type="component" value="Chromosome 3"/>
</dbReference>
<dbReference type="ExpressionAtlas" id="Q8LE94">
    <property type="expression patterns" value="baseline and differential"/>
</dbReference>
<dbReference type="GO" id="GO:0005737">
    <property type="term" value="C:cytoplasm"/>
    <property type="evidence" value="ECO:0007669"/>
    <property type="project" value="UniProtKB-SubCell"/>
</dbReference>
<dbReference type="GO" id="GO:0016740">
    <property type="term" value="F:transferase activity"/>
    <property type="evidence" value="ECO:0007669"/>
    <property type="project" value="UniProtKB-KW"/>
</dbReference>
<dbReference type="GO" id="GO:0008270">
    <property type="term" value="F:zinc ion binding"/>
    <property type="evidence" value="ECO:0007669"/>
    <property type="project" value="UniProtKB-KW"/>
</dbReference>
<dbReference type="GO" id="GO:0016567">
    <property type="term" value="P:protein ubiquitination"/>
    <property type="evidence" value="ECO:0007669"/>
    <property type="project" value="UniProtKB-UniPathway"/>
</dbReference>
<dbReference type="CDD" id="cd23116">
    <property type="entry name" value="RING-H2_AIRP1-like"/>
    <property type="match status" value="1"/>
</dbReference>
<dbReference type="FunFam" id="3.30.40.10:FF:000359">
    <property type="entry name" value="E3 ubiquitin-protein ligase At3g02290-like"/>
    <property type="match status" value="1"/>
</dbReference>
<dbReference type="Gene3D" id="3.30.40.10">
    <property type="entry name" value="Zinc/RING finger domain, C3HC4 (zinc finger)"/>
    <property type="match status" value="1"/>
</dbReference>
<dbReference type="InterPro" id="IPR001841">
    <property type="entry name" value="Znf_RING"/>
</dbReference>
<dbReference type="InterPro" id="IPR013083">
    <property type="entry name" value="Znf_RING/FYVE/PHD"/>
</dbReference>
<dbReference type="PANTHER" id="PTHR46463:SF86">
    <property type="entry name" value="RING-TYPE DOMAIN-CONTAINING PROTEIN"/>
    <property type="match status" value="1"/>
</dbReference>
<dbReference type="PANTHER" id="PTHR46463">
    <property type="entry name" value="ZINC FINGER, RING/FYVE/PHD-TYPE"/>
    <property type="match status" value="1"/>
</dbReference>
<dbReference type="Pfam" id="PF13639">
    <property type="entry name" value="zf-RING_2"/>
    <property type="match status" value="1"/>
</dbReference>
<dbReference type="SMART" id="SM00184">
    <property type="entry name" value="RING"/>
    <property type="match status" value="1"/>
</dbReference>
<dbReference type="SUPFAM" id="SSF57850">
    <property type="entry name" value="RING/U-box"/>
    <property type="match status" value="1"/>
</dbReference>
<dbReference type="PROSITE" id="PS50089">
    <property type="entry name" value="ZF_RING_2"/>
    <property type="match status" value="1"/>
</dbReference>
<comment type="function">
    <text evidence="1">Mediates E2-dependent protein ubiquitination.</text>
</comment>
<comment type="catalytic activity">
    <reaction>
        <text>S-ubiquitinyl-[E2 ubiquitin-conjugating enzyme]-L-cysteine + [acceptor protein]-L-lysine = [E2 ubiquitin-conjugating enzyme]-L-cysteine + N(6)-ubiquitinyl-[acceptor protein]-L-lysine.</text>
        <dbReference type="EC" id="2.3.2.27"/>
    </reaction>
</comment>
<comment type="pathway">
    <text>Protein modification; protein ubiquitination.</text>
</comment>
<comment type="subcellular location">
    <subcellularLocation>
        <location evidence="1">Cytoplasm</location>
    </subcellularLocation>
</comment>
<comment type="alternative products">
    <event type="alternative splicing"/>
    <isoform>
        <id>Q8LE94-1</id>
        <name>1</name>
        <sequence type="displayed"/>
    </isoform>
    <isoform>
        <id>Q8LE94-2</id>
        <name>2</name>
        <sequence type="described" ref="VSP_036336"/>
    </isoform>
</comment>
<comment type="domain">
    <text evidence="1">The RING-type zinc finger domain mediates binding to an E2 ubiquitin-conjugating enzyme.</text>
</comment>
<comment type="sequence caution" evidence="5">
    <conflict type="erroneous gene model prediction">
        <sequence resource="EMBL-CDS" id="AAF02127"/>
    </conflict>
</comment>
<keyword id="KW-0025">Alternative splicing</keyword>
<keyword id="KW-0963">Cytoplasm</keyword>
<keyword id="KW-0479">Metal-binding</keyword>
<keyword id="KW-1185">Reference proteome</keyword>
<keyword id="KW-0808">Transferase</keyword>
<keyword id="KW-0833">Ubl conjugation pathway</keyword>
<keyword id="KW-0862">Zinc</keyword>
<keyword id="KW-0863">Zinc-finger</keyword>
<feature type="chain" id="PRO_0000271543" description="E3 ubiquitin-protein ligase At3g02290">
    <location>
        <begin position="1"/>
        <end position="231"/>
    </location>
</feature>
<feature type="zinc finger region" description="RING-type; atypical" evidence="2">
    <location>
        <begin position="181"/>
        <end position="222"/>
    </location>
</feature>
<feature type="region of interest" description="Disordered" evidence="3">
    <location>
        <begin position="103"/>
        <end position="125"/>
    </location>
</feature>
<feature type="compositionally biased region" description="Basic and acidic residues" evidence="3">
    <location>
        <begin position="103"/>
        <end position="118"/>
    </location>
</feature>
<feature type="splice variant" id="VSP_036336" description="In isoform 2." evidence="4">
    <original>EYTSENPKIVTKCSHHFHLSCIYEWMERSENCPVCGKVMEFNETP</original>
    <variation>GNNNPIQQSPFCSFSIHILLVFCRIYIREPKDCDKMFTPFPP</variation>
    <location>
        <begin position="187"/>
        <end position="231"/>
    </location>
</feature>
<reference key="1">
    <citation type="journal article" date="2000" name="Nature">
        <title>Sequence and analysis of chromosome 3 of the plant Arabidopsis thaliana.</title>
        <authorList>
            <person name="Salanoubat M."/>
            <person name="Lemcke K."/>
            <person name="Rieger M."/>
            <person name="Ansorge W."/>
            <person name="Unseld M."/>
            <person name="Fartmann B."/>
            <person name="Valle G."/>
            <person name="Bloecker H."/>
            <person name="Perez-Alonso M."/>
            <person name="Obermaier B."/>
            <person name="Delseny M."/>
            <person name="Boutry M."/>
            <person name="Grivell L.A."/>
            <person name="Mache R."/>
            <person name="Puigdomenech P."/>
            <person name="De Simone V."/>
            <person name="Choisne N."/>
            <person name="Artiguenave F."/>
            <person name="Robert C."/>
            <person name="Brottier P."/>
            <person name="Wincker P."/>
            <person name="Cattolico L."/>
            <person name="Weissenbach J."/>
            <person name="Saurin W."/>
            <person name="Quetier F."/>
            <person name="Schaefer M."/>
            <person name="Mueller-Auer S."/>
            <person name="Gabel C."/>
            <person name="Fuchs M."/>
            <person name="Benes V."/>
            <person name="Wurmbach E."/>
            <person name="Drzonek H."/>
            <person name="Erfle H."/>
            <person name="Jordan N."/>
            <person name="Bangert S."/>
            <person name="Wiedelmann R."/>
            <person name="Kranz H."/>
            <person name="Voss H."/>
            <person name="Holland R."/>
            <person name="Brandt P."/>
            <person name="Nyakatura G."/>
            <person name="Vezzi A."/>
            <person name="D'Angelo M."/>
            <person name="Pallavicini A."/>
            <person name="Toppo S."/>
            <person name="Simionati B."/>
            <person name="Conrad A."/>
            <person name="Hornischer K."/>
            <person name="Kauer G."/>
            <person name="Loehnert T.-H."/>
            <person name="Nordsiek G."/>
            <person name="Reichelt J."/>
            <person name="Scharfe M."/>
            <person name="Schoen O."/>
            <person name="Bargues M."/>
            <person name="Terol J."/>
            <person name="Climent J."/>
            <person name="Navarro P."/>
            <person name="Collado C."/>
            <person name="Perez-Perez A."/>
            <person name="Ottenwaelder B."/>
            <person name="Duchemin D."/>
            <person name="Cooke R."/>
            <person name="Laudie M."/>
            <person name="Berger-Llauro C."/>
            <person name="Purnelle B."/>
            <person name="Masuy D."/>
            <person name="de Haan M."/>
            <person name="Maarse A.C."/>
            <person name="Alcaraz J.-P."/>
            <person name="Cottet A."/>
            <person name="Casacuberta E."/>
            <person name="Monfort A."/>
            <person name="Argiriou A."/>
            <person name="Flores M."/>
            <person name="Liguori R."/>
            <person name="Vitale D."/>
            <person name="Mannhaupt G."/>
            <person name="Haase D."/>
            <person name="Schoof H."/>
            <person name="Rudd S."/>
            <person name="Zaccaria P."/>
            <person name="Mewes H.-W."/>
            <person name="Mayer K.F.X."/>
            <person name="Kaul S."/>
            <person name="Town C.D."/>
            <person name="Koo H.L."/>
            <person name="Tallon L.J."/>
            <person name="Jenkins J."/>
            <person name="Rooney T."/>
            <person name="Rizzo M."/>
            <person name="Walts A."/>
            <person name="Utterback T."/>
            <person name="Fujii C.Y."/>
            <person name="Shea T.P."/>
            <person name="Creasy T.H."/>
            <person name="Haas B."/>
            <person name="Maiti R."/>
            <person name="Wu D."/>
            <person name="Peterson J."/>
            <person name="Van Aken S."/>
            <person name="Pai G."/>
            <person name="Militscher J."/>
            <person name="Sellers P."/>
            <person name="Gill J.E."/>
            <person name="Feldblyum T.V."/>
            <person name="Preuss D."/>
            <person name="Lin X."/>
            <person name="Nierman W.C."/>
            <person name="Salzberg S.L."/>
            <person name="White O."/>
            <person name="Venter J.C."/>
            <person name="Fraser C.M."/>
            <person name="Kaneko T."/>
            <person name="Nakamura Y."/>
            <person name="Sato S."/>
            <person name="Kato T."/>
            <person name="Asamizu E."/>
            <person name="Sasamoto S."/>
            <person name="Kimura T."/>
            <person name="Idesawa K."/>
            <person name="Kawashima K."/>
            <person name="Kishida Y."/>
            <person name="Kiyokawa C."/>
            <person name="Kohara M."/>
            <person name="Matsumoto M."/>
            <person name="Matsuno A."/>
            <person name="Muraki A."/>
            <person name="Nakayama S."/>
            <person name="Nakazaki N."/>
            <person name="Shinpo S."/>
            <person name="Takeuchi C."/>
            <person name="Wada T."/>
            <person name="Watanabe A."/>
            <person name="Yamada M."/>
            <person name="Yasuda M."/>
            <person name="Tabata S."/>
        </authorList>
    </citation>
    <scope>NUCLEOTIDE SEQUENCE [LARGE SCALE GENOMIC DNA]</scope>
    <source>
        <strain>cv. Columbia</strain>
    </source>
</reference>
<reference key="2">
    <citation type="journal article" date="2017" name="Plant J.">
        <title>Araport11: a complete reannotation of the Arabidopsis thaliana reference genome.</title>
        <authorList>
            <person name="Cheng C.Y."/>
            <person name="Krishnakumar V."/>
            <person name="Chan A.P."/>
            <person name="Thibaud-Nissen F."/>
            <person name="Schobel S."/>
            <person name="Town C.D."/>
        </authorList>
    </citation>
    <scope>GENOME REANNOTATION</scope>
    <source>
        <strain>cv. Columbia</strain>
    </source>
</reference>
<reference key="3">
    <citation type="submission" date="2005-03" db="EMBL/GenBank/DDBJ databases">
        <title>Large-scale analysis of RIKEN Arabidopsis full-length (RAFL) cDNAs.</title>
        <authorList>
            <person name="Totoki Y."/>
            <person name="Seki M."/>
            <person name="Ishida J."/>
            <person name="Nakajima M."/>
            <person name="Enju A."/>
            <person name="Kamiya A."/>
            <person name="Narusaka M."/>
            <person name="Shin-i T."/>
            <person name="Nakagawa M."/>
            <person name="Sakamoto N."/>
            <person name="Oishi K."/>
            <person name="Kohara Y."/>
            <person name="Kobayashi M."/>
            <person name="Toyoda A."/>
            <person name="Sakaki Y."/>
            <person name="Sakurai T."/>
            <person name="Iida K."/>
            <person name="Akiyama K."/>
            <person name="Satou M."/>
            <person name="Toyoda T."/>
            <person name="Konagaya A."/>
            <person name="Carninci P."/>
            <person name="Kawai J."/>
            <person name="Hayashizaki Y."/>
            <person name="Shinozaki K."/>
        </authorList>
    </citation>
    <scope>NUCLEOTIDE SEQUENCE [LARGE SCALE MRNA] (ISOFORM 2)</scope>
    <source>
        <strain>cv. Columbia</strain>
    </source>
</reference>
<reference key="4">
    <citation type="submission" date="2006-02" db="EMBL/GenBank/DDBJ databases">
        <title>Arabidopsis ORF clones.</title>
        <authorList>
            <person name="Shinn P."/>
            <person name="Chen H."/>
            <person name="Kim C.J."/>
            <person name="Ecker J.R."/>
        </authorList>
    </citation>
    <scope>NUCLEOTIDE SEQUENCE [LARGE SCALE MRNA] (ISOFORM 1)</scope>
    <source>
        <strain>cv. Columbia</strain>
    </source>
</reference>
<reference key="5">
    <citation type="submission" date="2002-03" db="EMBL/GenBank/DDBJ databases">
        <title>Full-length cDNA from Arabidopsis thaliana.</title>
        <authorList>
            <person name="Brover V.V."/>
            <person name="Troukhan M.E."/>
            <person name="Alexandrov N.A."/>
            <person name="Lu Y.-P."/>
            <person name="Flavell R.B."/>
            <person name="Feldmann K.A."/>
        </authorList>
    </citation>
    <scope>NUCLEOTIDE SEQUENCE [LARGE SCALE MRNA] (ISOFORM 1)</scope>
</reference>
<reference key="6">
    <citation type="journal article" date="2005" name="Plant Physiol.">
        <title>Functional analysis of the RING-type ubiquitin ligase family of Arabidopsis.</title>
        <authorList>
            <person name="Stone S.L."/>
            <person name="Hauksdottir H."/>
            <person name="Troy A."/>
            <person name="Herschleb J."/>
            <person name="Kraft E."/>
            <person name="Callis J."/>
        </authorList>
    </citation>
    <scope>IDENTIFICATION</scope>
</reference>
<accession>Q8LE94</accession>
<accession>Q56XU2</accession>
<accession>Q9SRU5</accession>
<protein>
    <recommendedName>
        <fullName>E3 ubiquitin-protein ligase At3g02290</fullName>
        <ecNumber>2.3.2.27</ecNumber>
    </recommendedName>
    <alternativeName>
        <fullName>RING finger protein At3g02290</fullName>
    </alternativeName>
    <alternativeName>
        <fullName evidence="5">RING-type E3 ubiquitin transferase At3g02290</fullName>
    </alternativeName>
</protein>